<accession>Q9BRK5</accession>
<accession>B1AME5</accession>
<accession>B1AME6</accession>
<accession>B2RDF1</accession>
<accession>B4DSM1</accession>
<accession>Q53G52</accession>
<accession>Q53HQ9</accession>
<accession>Q8NBQ3</accession>
<accession>Q96AA1</accession>
<accession>Q9NZP7</accession>
<accession>Q9UN53</accession>
<organism>
    <name type="scientific">Homo sapiens</name>
    <name type="common">Human</name>
    <dbReference type="NCBI Taxonomy" id="9606"/>
    <lineage>
        <taxon>Eukaryota</taxon>
        <taxon>Metazoa</taxon>
        <taxon>Chordata</taxon>
        <taxon>Craniata</taxon>
        <taxon>Vertebrata</taxon>
        <taxon>Euteleostomi</taxon>
        <taxon>Mammalia</taxon>
        <taxon>Eutheria</taxon>
        <taxon>Euarchontoglires</taxon>
        <taxon>Primates</taxon>
        <taxon>Haplorrhini</taxon>
        <taxon>Catarrhini</taxon>
        <taxon>Hominidae</taxon>
        <taxon>Homo</taxon>
    </lineage>
</organism>
<protein>
    <recommendedName>
        <fullName>45 kDa calcium-binding protein</fullName>
        <shortName>Cab45</shortName>
    </recommendedName>
    <alternativeName>
        <fullName>Stromal cell-derived factor 4</fullName>
        <shortName>SDF-4</shortName>
    </alternativeName>
</protein>
<evidence type="ECO:0000250" key="1"/>
<evidence type="ECO:0000250" key="2">
    <source>
        <dbReference type="UniProtKB" id="Q61112"/>
    </source>
</evidence>
<evidence type="ECO:0000255" key="3"/>
<evidence type="ECO:0000255" key="4">
    <source>
        <dbReference type="PROSITE-ProRule" id="PRU00448"/>
    </source>
</evidence>
<evidence type="ECO:0000269" key="5">
    <source>
    </source>
</evidence>
<evidence type="ECO:0000269" key="6">
    <source>
    </source>
</evidence>
<evidence type="ECO:0000303" key="7">
    <source>
    </source>
</evidence>
<evidence type="ECO:0000303" key="8">
    <source>
    </source>
</evidence>
<evidence type="ECO:0000303" key="9">
    <source ref="3"/>
</evidence>
<evidence type="ECO:0000305" key="10"/>
<evidence type="ECO:0007744" key="11">
    <source>
    </source>
</evidence>
<evidence type="ECO:0007744" key="12">
    <source>
    </source>
</evidence>
<reference key="1">
    <citation type="journal article" date="1997" name="DNA Seq.">
        <title>Sequence of a human cDNA encoding Cab45, a Ca2+-binding protein with six EF-hand motifs.</title>
        <authorList>
            <person name="Koivu T."/>
            <person name="Laitinen S."/>
            <person name="Riento K."/>
            <person name="Olkkonen V.M."/>
        </authorList>
    </citation>
    <scope>NUCLEOTIDE SEQUENCE [MRNA] (ISOFORM 6)</scope>
</reference>
<reference key="2">
    <citation type="submission" date="1999-03" db="EMBL/GenBank/DDBJ databases">
        <title>Cloning of a new human cDNA homologous to Mus musculus calcium-binding protein Cab45b.</title>
        <authorList>
            <person name="Yue P."/>
            <person name="Yu L."/>
            <person name="Zhao S.Y."/>
        </authorList>
    </citation>
    <scope>NUCLEOTIDE SEQUENCE [MRNA] (ISOFORM 1)</scope>
</reference>
<reference key="3">
    <citation type="submission" date="1999-05" db="EMBL/GenBank/DDBJ databases">
        <title>Novel human calcium-binding protein precursor.</title>
        <authorList>
            <person name="Zhang W."/>
            <person name="Wan T."/>
            <person name="Yuan Z."/>
            <person name="Cao X."/>
        </authorList>
    </citation>
    <scope>NUCLEOTIDE SEQUENCE [MRNA] (ISOFORM 3)</scope>
</reference>
<reference key="4">
    <citation type="submission" date="1999-08" db="EMBL/GenBank/DDBJ databases">
        <title>Identification of a novel calcium-binding protein Cab45 from dendritic cells.</title>
        <authorList>
            <person name="Zhang W."/>
            <person name="Wan T."/>
            <person name="Cao X."/>
        </authorList>
    </citation>
    <scope>NUCLEOTIDE SEQUENCE [MRNA] (ISOFORM 1)</scope>
</reference>
<reference key="5">
    <citation type="journal article" date="2004" name="Nat. Genet.">
        <title>Complete sequencing and characterization of 21,243 full-length human cDNAs.</title>
        <authorList>
            <person name="Ota T."/>
            <person name="Suzuki Y."/>
            <person name="Nishikawa T."/>
            <person name="Otsuki T."/>
            <person name="Sugiyama T."/>
            <person name="Irie R."/>
            <person name="Wakamatsu A."/>
            <person name="Hayashi K."/>
            <person name="Sato H."/>
            <person name="Nagai K."/>
            <person name="Kimura K."/>
            <person name="Makita H."/>
            <person name="Sekine M."/>
            <person name="Obayashi M."/>
            <person name="Nishi T."/>
            <person name="Shibahara T."/>
            <person name="Tanaka T."/>
            <person name="Ishii S."/>
            <person name="Yamamoto J."/>
            <person name="Saito K."/>
            <person name="Kawai Y."/>
            <person name="Isono Y."/>
            <person name="Nakamura Y."/>
            <person name="Nagahari K."/>
            <person name="Murakami K."/>
            <person name="Yasuda T."/>
            <person name="Iwayanagi T."/>
            <person name="Wagatsuma M."/>
            <person name="Shiratori A."/>
            <person name="Sudo H."/>
            <person name="Hosoiri T."/>
            <person name="Kaku Y."/>
            <person name="Kodaira H."/>
            <person name="Kondo H."/>
            <person name="Sugawara M."/>
            <person name="Takahashi M."/>
            <person name="Kanda K."/>
            <person name="Yokoi T."/>
            <person name="Furuya T."/>
            <person name="Kikkawa E."/>
            <person name="Omura Y."/>
            <person name="Abe K."/>
            <person name="Kamihara K."/>
            <person name="Katsuta N."/>
            <person name="Sato K."/>
            <person name="Tanikawa M."/>
            <person name="Yamazaki M."/>
            <person name="Ninomiya K."/>
            <person name="Ishibashi T."/>
            <person name="Yamashita H."/>
            <person name="Murakawa K."/>
            <person name="Fujimori K."/>
            <person name="Tanai H."/>
            <person name="Kimata M."/>
            <person name="Watanabe M."/>
            <person name="Hiraoka S."/>
            <person name="Chiba Y."/>
            <person name="Ishida S."/>
            <person name="Ono Y."/>
            <person name="Takiguchi S."/>
            <person name="Watanabe S."/>
            <person name="Yosida M."/>
            <person name="Hotuta T."/>
            <person name="Kusano J."/>
            <person name="Kanehori K."/>
            <person name="Takahashi-Fujii A."/>
            <person name="Hara H."/>
            <person name="Tanase T.-O."/>
            <person name="Nomura Y."/>
            <person name="Togiya S."/>
            <person name="Komai F."/>
            <person name="Hara R."/>
            <person name="Takeuchi K."/>
            <person name="Arita M."/>
            <person name="Imose N."/>
            <person name="Musashino K."/>
            <person name="Yuuki H."/>
            <person name="Oshima A."/>
            <person name="Sasaki N."/>
            <person name="Aotsuka S."/>
            <person name="Yoshikawa Y."/>
            <person name="Matsunawa H."/>
            <person name="Ichihara T."/>
            <person name="Shiohata N."/>
            <person name="Sano S."/>
            <person name="Moriya S."/>
            <person name="Momiyama H."/>
            <person name="Satoh N."/>
            <person name="Takami S."/>
            <person name="Terashima Y."/>
            <person name="Suzuki O."/>
            <person name="Nakagawa S."/>
            <person name="Senoh A."/>
            <person name="Mizoguchi H."/>
            <person name="Goto Y."/>
            <person name="Shimizu F."/>
            <person name="Wakebe H."/>
            <person name="Hishigaki H."/>
            <person name="Watanabe T."/>
            <person name="Sugiyama A."/>
            <person name="Takemoto M."/>
            <person name="Kawakami B."/>
            <person name="Yamazaki M."/>
            <person name="Watanabe K."/>
            <person name="Kumagai A."/>
            <person name="Itakura S."/>
            <person name="Fukuzumi Y."/>
            <person name="Fujimori Y."/>
            <person name="Komiyama M."/>
            <person name="Tashiro H."/>
            <person name="Tanigami A."/>
            <person name="Fujiwara T."/>
            <person name="Ono T."/>
            <person name="Yamada K."/>
            <person name="Fujii Y."/>
            <person name="Ozaki K."/>
            <person name="Hirao M."/>
            <person name="Ohmori Y."/>
            <person name="Kawabata A."/>
            <person name="Hikiji T."/>
            <person name="Kobatake N."/>
            <person name="Inagaki H."/>
            <person name="Ikema Y."/>
            <person name="Okamoto S."/>
            <person name="Okitani R."/>
            <person name="Kawakami T."/>
            <person name="Noguchi S."/>
            <person name="Itoh T."/>
            <person name="Shigeta K."/>
            <person name="Senba T."/>
            <person name="Matsumura K."/>
            <person name="Nakajima Y."/>
            <person name="Mizuno T."/>
            <person name="Morinaga M."/>
            <person name="Sasaki M."/>
            <person name="Togashi T."/>
            <person name="Oyama M."/>
            <person name="Hata H."/>
            <person name="Watanabe M."/>
            <person name="Komatsu T."/>
            <person name="Mizushima-Sugano J."/>
            <person name="Satoh T."/>
            <person name="Shirai Y."/>
            <person name="Takahashi Y."/>
            <person name="Nakagawa K."/>
            <person name="Okumura K."/>
            <person name="Nagase T."/>
            <person name="Nomura N."/>
            <person name="Kikuchi H."/>
            <person name="Masuho Y."/>
            <person name="Yamashita R."/>
            <person name="Nakai K."/>
            <person name="Yada T."/>
            <person name="Nakamura Y."/>
            <person name="Ohara O."/>
            <person name="Isogai T."/>
            <person name="Sugano S."/>
        </authorList>
    </citation>
    <scope>NUCLEOTIDE SEQUENCE [LARGE SCALE MRNA] (ISOFORMS 1; 2 AND 4)</scope>
    <source>
        <tissue>Brain</tissue>
        <tissue>Tongue</tissue>
    </source>
</reference>
<reference key="6">
    <citation type="journal article" date="2005" name="DNA Res.">
        <title>Signal sequence and keyword trap in silico for selection of full-length human cDNAs encoding secretion or membrane proteins from oligo-capped cDNA libraries.</title>
        <authorList>
            <person name="Otsuki T."/>
            <person name="Ota T."/>
            <person name="Nishikawa T."/>
            <person name="Hayashi K."/>
            <person name="Suzuki Y."/>
            <person name="Yamamoto J."/>
            <person name="Wakamatsu A."/>
            <person name="Kimura K."/>
            <person name="Sakamoto K."/>
            <person name="Hatano N."/>
            <person name="Kawai Y."/>
            <person name="Ishii S."/>
            <person name="Saito K."/>
            <person name="Kojima S."/>
            <person name="Sugiyama T."/>
            <person name="Ono T."/>
            <person name="Okano K."/>
            <person name="Yoshikawa Y."/>
            <person name="Aotsuka S."/>
            <person name="Sasaki N."/>
            <person name="Hattori A."/>
            <person name="Okumura K."/>
            <person name="Nagai K."/>
            <person name="Sugano S."/>
            <person name="Isogai T."/>
        </authorList>
    </citation>
    <scope>NUCLEOTIDE SEQUENCE [LARGE SCALE MRNA] (ISOFORM 1)</scope>
    <source>
        <tissue>Teratocarcinoma</tissue>
    </source>
</reference>
<reference key="7">
    <citation type="submission" date="2005-04" db="EMBL/GenBank/DDBJ databases">
        <authorList>
            <person name="Suzuki Y."/>
            <person name="Sugano S."/>
            <person name="Totoki Y."/>
            <person name="Toyoda A."/>
            <person name="Takeda T."/>
            <person name="Sakaki Y."/>
            <person name="Tanaka A."/>
            <person name="Yokoyama S."/>
        </authorList>
    </citation>
    <scope>NUCLEOTIDE SEQUENCE [LARGE SCALE MRNA] (ISOFORM 1)</scope>
    <source>
        <tissue>Adipose tissue</tissue>
    </source>
</reference>
<reference key="8">
    <citation type="journal article" date="2006" name="Nature">
        <title>The DNA sequence and biological annotation of human chromosome 1.</title>
        <authorList>
            <person name="Gregory S.G."/>
            <person name="Barlow K.F."/>
            <person name="McLay K.E."/>
            <person name="Kaul R."/>
            <person name="Swarbreck D."/>
            <person name="Dunham A."/>
            <person name="Scott C.E."/>
            <person name="Howe K.L."/>
            <person name="Woodfine K."/>
            <person name="Spencer C.C.A."/>
            <person name="Jones M.C."/>
            <person name="Gillson C."/>
            <person name="Searle S."/>
            <person name="Zhou Y."/>
            <person name="Kokocinski F."/>
            <person name="McDonald L."/>
            <person name="Evans R."/>
            <person name="Phillips K."/>
            <person name="Atkinson A."/>
            <person name="Cooper R."/>
            <person name="Jones C."/>
            <person name="Hall R.E."/>
            <person name="Andrews T.D."/>
            <person name="Lloyd C."/>
            <person name="Ainscough R."/>
            <person name="Almeida J.P."/>
            <person name="Ambrose K.D."/>
            <person name="Anderson F."/>
            <person name="Andrew R.W."/>
            <person name="Ashwell R.I.S."/>
            <person name="Aubin K."/>
            <person name="Babbage A.K."/>
            <person name="Bagguley C.L."/>
            <person name="Bailey J."/>
            <person name="Beasley H."/>
            <person name="Bethel G."/>
            <person name="Bird C.P."/>
            <person name="Bray-Allen S."/>
            <person name="Brown J.Y."/>
            <person name="Brown A.J."/>
            <person name="Buckley D."/>
            <person name="Burton J."/>
            <person name="Bye J."/>
            <person name="Carder C."/>
            <person name="Chapman J.C."/>
            <person name="Clark S.Y."/>
            <person name="Clarke G."/>
            <person name="Clee C."/>
            <person name="Cobley V."/>
            <person name="Collier R.E."/>
            <person name="Corby N."/>
            <person name="Coville G.J."/>
            <person name="Davies J."/>
            <person name="Deadman R."/>
            <person name="Dunn M."/>
            <person name="Earthrowl M."/>
            <person name="Ellington A.G."/>
            <person name="Errington H."/>
            <person name="Frankish A."/>
            <person name="Frankland J."/>
            <person name="French L."/>
            <person name="Garner P."/>
            <person name="Garnett J."/>
            <person name="Gay L."/>
            <person name="Ghori M.R.J."/>
            <person name="Gibson R."/>
            <person name="Gilby L.M."/>
            <person name="Gillett W."/>
            <person name="Glithero R.J."/>
            <person name="Grafham D.V."/>
            <person name="Griffiths C."/>
            <person name="Griffiths-Jones S."/>
            <person name="Grocock R."/>
            <person name="Hammond S."/>
            <person name="Harrison E.S.I."/>
            <person name="Hart E."/>
            <person name="Haugen E."/>
            <person name="Heath P.D."/>
            <person name="Holmes S."/>
            <person name="Holt K."/>
            <person name="Howden P.J."/>
            <person name="Hunt A.R."/>
            <person name="Hunt S.E."/>
            <person name="Hunter G."/>
            <person name="Isherwood J."/>
            <person name="James R."/>
            <person name="Johnson C."/>
            <person name="Johnson D."/>
            <person name="Joy A."/>
            <person name="Kay M."/>
            <person name="Kershaw J.K."/>
            <person name="Kibukawa M."/>
            <person name="Kimberley A.M."/>
            <person name="King A."/>
            <person name="Knights A.J."/>
            <person name="Lad H."/>
            <person name="Laird G."/>
            <person name="Lawlor S."/>
            <person name="Leongamornlert D.A."/>
            <person name="Lloyd D.M."/>
            <person name="Loveland J."/>
            <person name="Lovell J."/>
            <person name="Lush M.J."/>
            <person name="Lyne R."/>
            <person name="Martin S."/>
            <person name="Mashreghi-Mohammadi M."/>
            <person name="Matthews L."/>
            <person name="Matthews N.S.W."/>
            <person name="McLaren S."/>
            <person name="Milne S."/>
            <person name="Mistry S."/>
            <person name="Moore M.J.F."/>
            <person name="Nickerson T."/>
            <person name="O'Dell C.N."/>
            <person name="Oliver K."/>
            <person name="Palmeiri A."/>
            <person name="Palmer S.A."/>
            <person name="Parker A."/>
            <person name="Patel D."/>
            <person name="Pearce A.V."/>
            <person name="Peck A.I."/>
            <person name="Pelan S."/>
            <person name="Phelps K."/>
            <person name="Phillimore B.J."/>
            <person name="Plumb R."/>
            <person name="Rajan J."/>
            <person name="Raymond C."/>
            <person name="Rouse G."/>
            <person name="Saenphimmachak C."/>
            <person name="Sehra H.K."/>
            <person name="Sheridan E."/>
            <person name="Shownkeen R."/>
            <person name="Sims S."/>
            <person name="Skuce C.D."/>
            <person name="Smith M."/>
            <person name="Steward C."/>
            <person name="Subramanian S."/>
            <person name="Sycamore N."/>
            <person name="Tracey A."/>
            <person name="Tromans A."/>
            <person name="Van Helmond Z."/>
            <person name="Wall M."/>
            <person name="Wallis J.M."/>
            <person name="White S."/>
            <person name="Whitehead S.L."/>
            <person name="Wilkinson J.E."/>
            <person name="Willey D.L."/>
            <person name="Williams H."/>
            <person name="Wilming L."/>
            <person name="Wray P.W."/>
            <person name="Wu Z."/>
            <person name="Coulson A."/>
            <person name="Vaudin M."/>
            <person name="Sulston J.E."/>
            <person name="Durbin R.M."/>
            <person name="Hubbard T."/>
            <person name="Wooster R."/>
            <person name="Dunham I."/>
            <person name="Carter N.P."/>
            <person name="McVean G."/>
            <person name="Ross M.T."/>
            <person name="Harrow J."/>
            <person name="Olson M.V."/>
            <person name="Beck S."/>
            <person name="Rogers J."/>
            <person name="Bentley D.R."/>
        </authorList>
    </citation>
    <scope>NUCLEOTIDE SEQUENCE [LARGE SCALE GENOMIC DNA]</scope>
</reference>
<reference key="9">
    <citation type="submission" date="2005-07" db="EMBL/GenBank/DDBJ databases">
        <authorList>
            <person name="Mural R.J."/>
            <person name="Istrail S."/>
            <person name="Sutton G.G."/>
            <person name="Florea L."/>
            <person name="Halpern A.L."/>
            <person name="Mobarry C.M."/>
            <person name="Lippert R."/>
            <person name="Walenz B."/>
            <person name="Shatkay H."/>
            <person name="Dew I."/>
            <person name="Miller J.R."/>
            <person name="Flanigan M.J."/>
            <person name="Edwards N.J."/>
            <person name="Bolanos R."/>
            <person name="Fasulo D."/>
            <person name="Halldorsson B.V."/>
            <person name="Hannenhalli S."/>
            <person name="Turner R."/>
            <person name="Yooseph S."/>
            <person name="Lu F."/>
            <person name="Nusskern D.R."/>
            <person name="Shue B.C."/>
            <person name="Zheng X.H."/>
            <person name="Zhong F."/>
            <person name="Delcher A.L."/>
            <person name="Huson D.H."/>
            <person name="Kravitz S.A."/>
            <person name="Mouchard L."/>
            <person name="Reinert K."/>
            <person name="Remington K.A."/>
            <person name="Clark A.G."/>
            <person name="Waterman M.S."/>
            <person name="Eichler E.E."/>
            <person name="Adams M.D."/>
            <person name="Hunkapiller M.W."/>
            <person name="Myers E.W."/>
            <person name="Venter J.C."/>
        </authorList>
    </citation>
    <scope>NUCLEOTIDE SEQUENCE [LARGE SCALE GENOMIC DNA]</scope>
</reference>
<reference key="10">
    <citation type="journal article" date="2004" name="Genome Res.">
        <title>The status, quality, and expansion of the NIH full-length cDNA project: the Mammalian Gene Collection (MGC).</title>
        <authorList>
            <consortium name="The MGC Project Team"/>
        </authorList>
    </citation>
    <scope>NUCLEOTIDE SEQUENCE [LARGE SCALE MRNA] (ISOFORM 1)</scope>
    <source>
        <tissue>Brain</tissue>
        <tissue>Pancreas</tissue>
        <tissue>Prostate</tissue>
    </source>
</reference>
<reference key="11">
    <citation type="journal article" date="2007" name="Mol. Biol. Cell">
        <title>A cytosolic splice variant of Cab45 interacts with Munc18b and impacts on amylase secretion by pancreatic acini.</title>
        <authorList>
            <person name="Lam P.P."/>
            <person name="Hyvaerinen K."/>
            <person name="Kauppi M."/>
            <person name="Cosen-Binker L."/>
            <person name="Laitinen S."/>
            <person name="Keraenen S."/>
            <person name="Gaisano H.Y."/>
            <person name="Olkkonen V.M."/>
        </authorList>
    </citation>
    <scope>INTERACTION WITH STX3 AND STXBP1</scope>
    <scope>SUBCELLULAR LOCATION</scope>
    <scope>ALTERNATIVE SPLICING (ISOFORM 5)</scope>
    <scope>MUTAGENESIS OF GLU-257; GLU-302 AND GLU-338</scope>
    <scope>TISSUE SPECIFICITY</scope>
</reference>
<reference key="12">
    <citation type="journal article" date="2011" name="BMC Syst. Biol.">
        <title>Initial characterization of the human central proteome.</title>
        <authorList>
            <person name="Burkard T.R."/>
            <person name="Planyavsky M."/>
            <person name="Kaupe I."/>
            <person name="Breitwieser F.P."/>
            <person name="Buerckstuemmer T."/>
            <person name="Bennett K.L."/>
            <person name="Superti-Furga G."/>
            <person name="Colinge J."/>
        </authorList>
    </citation>
    <scope>IDENTIFICATION BY MASS SPECTROMETRY [LARGE SCALE ANALYSIS]</scope>
</reference>
<reference key="13">
    <citation type="journal article" date="2013" name="J. Proteome Res.">
        <title>Toward a comprehensive characterization of a human cancer cell phosphoproteome.</title>
        <authorList>
            <person name="Zhou H."/>
            <person name="Di Palma S."/>
            <person name="Preisinger C."/>
            <person name="Peng M."/>
            <person name="Polat A.N."/>
            <person name="Heck A.J."/>
            <person name="Mohammed S."/>
        </authorList>
    </citation>
    <scope>PHOSPHORYLATION [LARGE SCALE ANALYSIS] AT SER-99</scope>
    <scope>IDENTIFICATION BY MASS SPECTROMETRY [LARGE SCALE ANALYSIS]</scope>
    <source>
        <tissue>Erythroleukemia</tissue>
    </source>
</reference>
<reference key="14">
    <citation type="journal article" date="2014" name="J. Proteomics">
        <title>An enzyme assisted RP-RPLC approach for in-depth analysis of human liver phosphoproteome.</title>
        <authorList>
            <person name="Bian Y."/>
            <person name="Song C."/>
            <person name="Cheng K."/>
            <person name="Dong M."/>
            <person name="Wang F."/>
            <person name="Huang J."/>
            <person name="Sun D."/>
            <person name="Wang L."/>
            <person name="Ye M."/>
            <person name="Zou H."/>
        </authorList>
    </citation>
    <scope>PHOSPHORYLATION [LARGE SCALE ANALYSIS] AT THR-193; THR-217; THR-265 AND THR-299</scope>
    <scope>IDENTIFICATION BY MASS SPECTROMETRY [LARGE SCALE ANALYSIS]</scope>
    <source>
        <tissue>Liver</tissue>
    </source>
</reference>
<reference key="15">
    <citation type="journal article" date="2006" name="Science">
        <title>The consensus coding sequences of human breast and colorectal cancers.</title>
        <authorList>
            <person name="Sjoeblom T."/>
            <person name="Jones S."/>
            <person name="Wood L.D."/>
            <person name="Parsons D.W."/>
            <person name="Lin J."/>
            <person name="Barber T.D."/>
            <person name="Mandelker D."/>
            <person name="Leary R.J."/>
            <person name="Ptak J."/>
            <person name="Silliman N."/>
            <person name="Szabo S."/>
            <person name="Buckhaults P."/>
            <person name="Farrell C."/>
            <person name="Meeh P."/>
            <person name="Markowitz S.D."/>
            <person name="Willis J."/>
            <person name="Dawson D."/>
            <person name="Willson J.K.V."/>
            <person name="Gazdar A.F."/>
            <person name="Hartigan J."/>
            <person name="Wu L."/>
            <person name="Liu C."/>
            <person name="Parmigiani G."/>
            <person name="Park B.H."/>
            <person name="Bachman K.E."/>
            <person name="Papadopoulos N."/>
            <person name="Vogelstein B."/>
            <person name="Kinzler K.W."/>
            <person name="Velculescu V.E."/>
        </authorList>
    </citation>
    <scope>VARIANT [LARGE SCALE ANALYSIS] THR-148</scope>
</reference>
<name>CAB45_HUMAN</name>
<feature type="signal peptide" evidence="3">
    <location>
        <begin position="1"/>
        <end position="36"/>
    </location>
</feature>
<feature type="chain" id="PRO_0000004156" description="45 kDa calcium-binding protein">
    <location>
        <begin position="37"/>
        <end position="362"/>
    </location>
</feature>
<feature type="domain" description="EF-hand 1" evidence="4">
    <location>
        <begin position="98"/>
        <end position="133"/>
    </location>
</feature>
<feature type="domain" description="EF-hand 2" evidence="4">
    <location>
        <begin position="137"/>
        <end position="172"/>
    </location>
</feature>
<feature type="domain" description="EF-hand 3" evidence="10">
    <location>
        <begin position="197"/>
        <end position="232"/>
    </location>
</feature>
<feature type="domain" description="EF-hand 4" evidence="4">
    <location>
        <begin position="233"/>
        <end position="268"/>
    </location>
</feature>
<feature type="domain" description="EF-hand 5" evidence="4">
    <location>
        <begin position="278"/>
        <end position="313"/>
    </location>
</feature>
<feature type="domain" description="EF-hand 6" evidence="4">
    <location>
        <begin position="314"/>
        <end position="349"/>
    </location>
</feature>
<feature type="region of interest" description="Necessary for intracellular retention in Golgi apparatus lumen" evidence="1">
    <location>
        <begin position="309"/>
        <end position="362"/>
    </location>
</feature>
<feature type="binding site" evidence="4">
    <location>
        <position position="111"/>
    </location>
    <ligand>
        <name>Ca(2+)</name>
        <dbReference type="ChEBI" id="CHEBI:29108"/>
        <label>1</label>
    </ligand>
</feature>
<feature type="binding site" evidence="4">
    <location>
        <position position="113"/>
    </location>
    <ligand>
        <name>Ca(2+)</name>
        <dbReference type="ChEBI" id="CHEBI:29108"/>
        <label>1</label>
    </ligand>
</feature>
<feature type="binding site" evidence="4">
    <location>
        <position position="115"/>
    </location>
    <ligand>
        <name>Ca(2+)</name>
        <dbReference type="ChEBI" id="CHEBI:29108"/>
        <label>1</label>
    </ligand>
</feature>
<feature type="binding site" evidence="4">
    <location>
        <position position="117"/>
    </location>
    <ligand>
        <name>Ca(2+)</name>
        <dbReference type="ChEBI" id="CHEBI:29108"/>
        <label>1</label>
    </ligand>
</feature>
<feature type="binding site" evidence="4">
    <location>
        <position position="122"/>
    </location>
    <ligand>
        <name>Ca(2+)</name>
        <dbReference type="ChEBI" id="CHEBI:29108"/>
        <label>1</label>
    </ligand>
</feature>
<feature type="binding site" evidence="4">
    <location>
        <position position="150"/>
    </location>
    <ligand>
        <name>Ca(2+)</name>
        <dbReference type="ChEBI" id="CHEBI:29108"/>
        <label>2</label>
    </ligand>
</feature>
<feature type="binding site" evidence="4">
    <location>
        <position position="152"/>
    </location>
    <ligand>
        <name>Ca(2+)</name>
        <dbReference type="ChEBI" id="CHEBI:29108"/>
        <label>2</label>
    </ligand>
</feature>
<feature type="binding site" evidence="4">
    <location>
        <position position="154"/>
    </location>
    <ligand>
        <name>Ca(2+)</name>
        <dbReference type="ChEBI" id="CHEBI:29108"/>
        <label>2</label>
    </ligand>
</feature>
<feature type="binding site" evidence="4">
    <location>
        <position position="156"/>
    </location>
    <ligand>
        <name>Ca(2+)</name>
        <dbReference type="ChEBI" id="CHEBI:29108"/>
        <label>2</label>
    </ligand>
</feature>
<feature type="binding site" evidence="4">
    <location>
        <position position="161"/>
    </location>
    <ligand>
        <name>Ca(2+)</name>
        <dbReference type="ChEBI" id="CHEBI:29108"/>
        <label>2</label>
    </ligand>
</feature>
<feature type="binding site" evidence="10">
    <location>
        <position position="213"/>
    </location>
    <ligand>
        <name>Ca(2+)</name>
        <dbReference type="ChEBI" id="CHEBI:29108"/>
        <label>3</label>
    </ligand>
</feature>
<feature type="binding site" evidence="10">
    <location>
        <position position="220"/>
    </location>
    <ligand>
        <name>Ca(2+)</name>
        <dbReference type="ChEBI" id="CHEBI:29108"/>
        <label>3</label>
    </ligand>
</feature>
<feature type="binding site" evidence="4">
    <location>
        <position position="246"/>
    </location>
    <ligand>
        <name>Ca(2+)</name>
        <dbReference type="ChEBI" id="CHEBI:29108"/>
        <label>4</label>
    </ligand>
</feature>
<feature type="binding site" evidence="4">
    <location>
        <position position="248"/>
    </location>
    <ligand>
        <name>Ca(2+)</name>
        <dbReference type="ChEBI" id="CHEBI:29108"/>
        <label>4</label>
    </ligand>
</feature>
<feature type="binding site" evidence="4">
    <location>
        <position position="250"/>
    </location>
    <ligand>
        <name>Ca(2+)</name>
        <dbReference type="ChEBI" id="CHEBI:29108"/>
        <label>4</label>
    </ligand>
</feature>
<feature type="binding site" evidence="4">
    <location>
        <position position="252"/>
    </location>
    <ligand>
        <name>Ca(2+)</name>
        <dbReference type="ChEBI" id="CHEBI:29108"/>
        <label>4</label>
    </ligand>
</feature>
<feature type="binding site" evidence="4">
    <location>
        <position position="257"/>
    </location>
    <ligand>
        <name>Ca(2+)</name>
        <dbReference type="ChEBI" id="CHEBI:29108"/>
        <label>4</label>
    </ligand>
</feature>
<feature type="binding site" evidence="4">
    <location>
        <position position="291"/>
    </location>
    <ligand>
        <name>Ca(2+)</name>
        <dbReference type="ChEBI" id="CHEBI:29108"/>
        <label>5</label>
    </ligand>
</feature>
<feature type="binding site" evidence="4">
    <location>
        <position position="293"/>
    </location>
    <ligand>
        <name>Ca(2+)</name>
        <dbReference type="ChEBI" id="CHEBI:29108"/>
        <label>5</label>
    </ligand>
</feature>
<feature type="binding site" evidence="4">
    <location>
        <position position="295"/>
    </location>
    <ligand>
        <name>Ca(2+)</name>
        <dbReference type="ChEBI" id="CHEBI:29108"/>
        <label>5</label>
    </ligand>
</feature>
<feature type="binding site" evidence="4">
    <location>
        <position position="302"/>
    </location>
    <ligand>
        <name>Ca(2+)</name>
        <dbReference type="ChEBI" id="CHEBI:29108"/>
        <label>5</label>
    </ligand>
</feature>
<feature type="binding site" evidence="4">
    <location>
        <position position="327"/>
    </location>
    <ligand>
        <name>Ca(2+)</name>
        <dbReference type="ChEBI" id="CHEBI:29108"/>
        <label>6</label>
    </ligand>
</feature>
<feature type="binding site" evidence="4">
    <location>
        <position position="329"/>
    </location>
    <ligand>
        <name>Ca(2+)</name>
        <dbReference type="ChEBI" id="CHEBI:29108"/>
        <label>6</label>
    </ligand>
</feature>
<feature type="binding site" evidence="4">
    <location>
        <position position="331"/>
    </location>
    <ligand>
        <name>Ca(2+)</name>
        <dbReference type="ChEBI" id="CHEBI:29108"/>
        <label>6</label>
    </ligand>
</feature>
<feature type="binding site" evidence="4">
    <location>
        <position position="333"/>
    </location>
    <ligand>
        <name>Ca(2+)</name>
        <dbReference type="ChEBI" id="CHEBI:29108"/>
        <label>6</label>
    </ligand>
</feature>
<feature type="binding site" evidence="4">
    <location>
        <position position="338"/>
    </location>
    <ligand>
        <name>Ca(2+)</name>
        <dbReference type="ChEBI" id="CHEBI:29108"/>
        <label>6</label>
    </ligand>
</feature>
<feature type="modified residue" description="Phosphoserine" evidence="11">
    <location>
        <position position="99"/>
    </location>
</feature>
<feature type="modified residue" description="Phosphothreonine" evidence="12">
    <location>
        <position position="193"/>
    </location>
</feature>
<feature type="modified residue" description="Phosphothreonine" evidence="12">
    <location>
        <position position="217"/>
    </location>
</feature>
<feature type="modified residue" description="Phosphothreonine" evidence="12">
    <location>
        <position position="265"/>
    </location>
</feature>
<feature type="modified residue" description="Phosphothreonine" evidence="12">
    <location>
        <position position="299"/>
    </location>
</feature>
<feature type="glycosylation site" description="N-linked (GlcNAc...) asparagine" evidence="3">
    <location>
        <position position="40"/>
    </location>
</feature>
<feature type="splice variant" id="VSP_037484" description="In isoform 5." evidence="10">
    <location>
        <begin position="1"/>
        <end position="232"/>
    </location>
</feature>
<feature type="splice variant" id="VSP_037485" description="In isoform 2." evidence="7">
    <location>
        <begin position="1"/>
        <end position="103"/>
    </location>
</feature>
<feature type="splice variant" id="VSP_037486" description="In isoform 3." evidence="9">
    <original>TQEVLENLKDRWYQADSPPADLLLTEEEFLSFLHPEHSRGMLRFMVKEIVRDLDQDGDKQLS</original>
    <variation>SCAPLSTGSPGEPEGPLVPGGQPPCRPAADGGGVPVGPPPRAQPGNAQVHGEGDRPGPGPGR</variation>
    <location>
        <begin position="193"/>
        <end position="254"/>
    </location>
</feature>
<feature type="splice variant" id="VSP_037487" description="In isoform 4." evidence="7">
    <original>TQEVLENLKD</original>
    <variation>RHGPPGPRAL</variation>
    <location>
        <begin position="193"/>
        <end position="202"/>
    </location>
</feature>
<feature type="splice variant" id="VSP_037488" description="In isoform 4." evidence="7">
    <location>
        <begin position="203"/>
        <end position="362"/>
    </location>
</feature>
<feature type="splice variant" id="VSP_037489" description="In isoform 3." evidence="9">
    <location>
        <begin position="255"/>
        <end position="362"/>
    </location>
</feature>
<feature type="splice variant" id="VSP_040559" description="In isoform 6." evidence="8">
    <original>SYMDPMNEYNALNEAKQMIAVADENQNHHLEPEEVLKYSEFFTGSKLVDYARSVHEEF</original>
    <variation>NVPTLPLQPIGTLNSHFVRLAAELGGGKATLTCAPLARRATWTP</variation>
    <location>
        <begin position="305"/>
        <end position="362"/>
    </location>
</feature>
<feature type="sequence variant" id="VAR_048659" description="In dbSNP:rs12745364.">
    <original>N</original>
    <variation>D</variation>
    <location>
        <position position="50"/>
    </location>
</feature>
<feature type="sequence variant" id="VAR_035461" description="In a colorectal cancer sample; somatic mutation; dbSNP:rs766752243." evidence="5">
    <original>A</original>
    <variation>T</variation>
    <location>
        <position position="148"/>
    </location>
</feature>
<feature type="mutagenesis site" description="Does not affect calcium-binding." evidence="6">
    <original>E</original>
    <variation>Q</variation>
    <location>
        <position position="257"/>
    </location>
</feature>
<feature type="mutagenesis site" description="Inhibits calcium-binding." evidence="6">
    <original>E</original>
    <variation>Q</variation>
    <location>
        <position position="302"/>
    </location>
</feature>
<feature type="mutagenesis site" description="Does not affect calcium-binding." evidence="6">
    <original>E</original>
    <variation>Q</variation>
    <location>
        <position position="338"/>
    </location>
</feature>
<feature type="sequence conflict" description="In Ref. 2; AAL75950." evidence="10" ref="2">
    <original>H</original>
    <variation>Q</variation>
    <location>
        <position position="78"/>
    </location>
</feature>
<feature type="sequence conflict" description="In Ref. 2; AAL75950." evidence="10" ref="2">
    <original>D</original>
    <variation>N</variation>
    <location>
        <position position="86"/>
    </location>
</feature>
<feature type="sequence conflict" description="In Ref. 2; AAL75950." evidence="10" ref="2">
    <original>G</original>
    <variation>C</variation>
    <location>
        <position position="89"/>
    </location>
</feature>
<feature type="sequence conflict" description="In Ref. 2; AAL75950." evidence="10" ref="2">
    <original>E</original>
    <variation>R</variation>
    <location>
        <position position="92"/>
    </location>
</feature>
<feature type="sequence conflict" description="In Ref. 2; AAL75950." evidence="10" ref="2">
    <original>A</original>
    <variation>T</variation>
    <location>
        <position position="94"/>
    </location>
</feature>
<feature type="sequence conflict" description="In Ref. 2; AAL75950." evidence="10" ref="2">
    <original>R</original>
    <variation>P</variation>
    <location>
        <position position="97"/>
    </location>
</feature>
<feature type="sequence conflict" description="In Ref. 6; BAC11563." evidence="10" ref="6">
    <original>K</original>
    <variation>R</variation>
    <location>
        <position position="117"/>
    </location>
</feature>
<feature type="sequence conflict" description="In Ref. 6; BAC11563." evidence="10" ref="6">
    <original>E</original>
    <variation>G</variation>
    <location>
        <position position="133"/>
    </location>
</feature>
<feature type="sequence conflict" description="In Ref. 2; AAL75950." evidence="10" ref="2">
    <original>D</original>
    <variation>G</variation>
    <location>
        <position position="150"/>
    </location>
</feature>
<feature type="sequence conflict" description="In Ref. 5; BAG37898." evidence="10" ref="5">
    <original>K</original>
    <variation>R</variation>
    <location>
        <position position="188"/>
    </location>
</feature>
<feature type="sequence conflict" description="In Ref. 7; BAD96241." evidence="10" ref="7">
    <original>T</original>
    <variation>A</variation>
    <location>
        <position position="193"/>
    </location>
</feature>
<feature type="sequence conflict" description="In Ref. 7; BAD96799." evidence="10" ref="7">
    <original>L</original>
    <variation>P</variation>
    <location>
        <position position="234"/>
    </location>
</feature>
<feature type="sequence conflict" description="In Ref. 2; AAL75950." evidence="10" ref="2">
    <original>DR</original>
    <variation>KK</variation>
    <location>
        <begin position="281"/>
        <end position="282"/>
    </location>
</feature>
<feature type="sequence conflict" description="In Ref. 2; AAL75950." evidence="10" ref="2">
    <original>F</original>
    <variation>L</variation>
    <location>
        <position position="286"/>
    </location>
</feature>
<feature type="sequence conflict" description="In Ref. 7; BAD96799." evidence="10" ref="7">
    <original>Q</original>
    <variation>R</variation>
    <location>
        <position position="321"/>
    </location>
</feature>
<feature type="sequence conflict" description="In Ref. 2; AAL75950." evidence="10" ref="2">
    <original>R</original>
    <variation>S</variation>
    <location>
        <position position="356"/>
    </location>
</feature>
<comment type="function">
    <text evidence="1">May regulate calcium-dependent activities in the endoplasmic reticulum lumen or post-ER compartment.</text>
</comment>
<comment type="function">
    <text>Isoform 5 may be involved in the exocytosis of zymogens by pancreatic acini.</text>
</comment>
<comment type="subunit">
    <text evidence="6">Isoform 5 interacts with STXBP1; the interaction is enhanced in presence of calcium. Isoform 5 interacts with STX3.</text>
</comment>
<comment type="interaction">
    <interactant intactId="EBI-1389808">
        <id>Q9BRK5</id>
    </interactant>
    <interactant intactId="EBI-718729">
        <id>P55212</id>
        <label>CASP6</label>
    </interactant>
    <organismsDiffer>false</organismsDiffer>
    <experiments>3</experiments>
</comment>
<comment type="interaction">
    <interactant intactId="EBI-1389808">
        <id>Q9BRK5</id>
    </interactant>
    <interactant intactId="EBI-21591415">
        <id>P13473-2</id>
        <label>LAMP2</label>
    </interactant>
    <organismsDiffer>false</organismsDiffer>
    <experiments>3</experiments>
</comment>
<comment type="interaction">
    <interactant intactId="EBI-1389808">
        <id>Q9BRK5</id>
    </interactant>
    <interactant intactId="EBI-5280197">
        <id>O75400-2</id>
        <label>PRPF40A</label>
    </interactant>
    <organismsDiffer>false</organismsDiffer>
    <experiments>3</experiments>
</comment>
<comment type="interaction">
    <interactant intactId="EBI-1389808">
        <id>Q9BRK5</id>
    </interactant>
    <interactant intactId="EBI-2623095">
        <id>Q9Y371</id>
        <label>SH3GLB1</label>
    </interactant>
    <organismsDiffer>false</organismsDiffer>
    <experiments>3</experiments>
</comment>
<comment type="subcellular location">
    <molecule>Isoform 1</molecule>
    <subcellularLocation>
        <location evidence="2">Golgi apparatus lumen</location>
    </subcellularLocation>
</comment>
<comment type="subcellular location">
    <molecule>Isoform 5</molecule>
    <subcellularLocation>
        <location evidence="6">Cytoplasm</location>
    </subcellularLocation>
    <subcellularLocation>
        <location evidence="6">Cell membrane</location>
    </subcellularLocation>
    <subcellularLocation>
        <location>Cell projection</location>
        <location>Bleb</location>
    </subcellularLocation>
    <text evidence="6">Isoform 5 colocalizes with STX3 and STXBP1 isoform 2 at the plasma membrane and cell surface blebs.</text>
</comment>
<comment type="alternative products">
    <event type="alternative splicing"/>
    <isoform>
        <id>Q9BRK5-1</id>
        <name>1</name>
        <name>Cab45a</name>
        <name>Cab45-G</name>
        <sequence type="displayed"/>
    </isoform>
    <isoform>
        <id>Q9BRK5-2</id>
        <name>2</name>
        <sequence type="described" ref="VSP_037485"/>
    </isoform>
    <isoform>
        <id>Q9BRK5-3</id>
        <name>3</name>
        <sequence type="described" ref="VSP_037486 VSP_037489"/>
    </isoform>
    <isoform>
        <id>Q9BRK5-4</id>
        <name>4</name>
        <sequence type="described" ref="VSP_037487 VSP_037488"/>
    </isoform>
    <isoform>
        <id>Q9BRK5-5</id>
        <name>5</name>
        <name>Cab45b</name>
        <name>Cab45-C</name>
        <sequence type="described" ref="VSP_037484"/>
    </isoform>
    <isoform>
        <id>Q9BRK5-6</id>
        <name>6</name>
        <sequence type="described" ref="VSP_040559"/>
    </isoform>
</comment>
<comment type="tissue specificity">
    <text evidence="6">Ubiquitous. Isoform 5 is expressed in pancreas.</text>
</comment>
<comment type="domain">
    <text evidence="1">Binds calcium via its EF-hands (By similarity). Isoform 5 binds calcium.</text>
</comment>
<comment type="similarity">
    <text evidence="10">Belongs to the CREC family.</text>
</comment>
<comment type="sequence caution" evidence="10">
    <conflict type="frameshift">
        <sequence resource="EMBL-CDS" id="AAL75950"/>
    </conflict>
</comment>
<proteinExistence type="evidence at protein level"/>
<sequence length="362" mass="41807">MVWPWVAMASRWGPLIGLAPCCLWLLGAVLLMDASARPANHSSTRERVANREENEILPPDHLNGVKLEMDGHLNRGFHQEVFLGKDLGGFDEDAEPRRSRRKLMVIFSKVDVNTDRKISAKEMQRWIMEKTAEHFQEAMEESKTHFRAVDPDGDGHVSWDEYKVKFLASKGHSEKEVADAIRLNEELKVDEETQEVLENLKDRWYQADSPPADLLLTEEEFLSFLHPEHSRGMLRFMVKEIVRDLDQDGDKQLSVPEFISLPVGTVENQQGQDIDDNWVKDRKKEFEELIDSNHDGIVTAEELESYMDPMNEYNALNEAKQMIAVADENQNHHLEPEEVLKYSEFFTGSKLVDYARSVHEEF</sequence>
<gene>
    <name type="primary">SDF4</name>
    <name type="synonym">CAB45</name>
    <name type="ORF">PSEC0034</name>
</gene>
<dbReference type="EMBL" id="L79912">
    <property type="protein sequence ID" value="AAL40084.1"/>
    <property type="molecule type" value="mRNA"/>
</dbReference>
<dbReference type="EMBL" id="AF132749">
    <property type="protein sequence ID" value="AAL75950.1"/>
    <property type="status" value="ALT_FRAME"/>
    <property type="molecule type" value="mRNA"/>
</dbReference>
<dbReference type="EMBL" id="AF153686">
    <property type="protein sequence ID" value="AAD51612.1"/>
    <property type="molecule type" value="mRNA"/>
</dbReference>
<dbReference type="EMBL" id="AF178986">
    <property type="protein sequence ID" value="AAF44350.1"/>
    <property type="molecule type" value="mRNA"/>
</dbReference>
<dbReference type="EMBL" id="AK027277">
    <property type="protein sequence ID" value="BAB55012.1"/>
    <property type="molecule type" value="mRNA"/>
</dbReference>
<dbReference type="EMBL" id="AK299810">
    <property type="protein sequence ID" value="BAG61683.1"/>
    <property type="molecule type" value="mRNA"/>
</dbReference>
<dbReference type="EMBL" id="AK315517">
    <property type="protein sequence ID" value="BAG37898.1"/>
    <property type="molecule type" value="mRNA"/>
</dbReference>
<dbReference type="EMBL" id="AK075352">
    <property type="protein sequence ID" value="BAC11563.1"/>
    <property type="molecule type" value="mRNA"/>
</dbReference>
<dbReference type="EMBL" id="AK222521">
    <property type="protein sequence ID" value="BAD96241.1"/>
    <property type="molecule type" value="mRNA"/>
</dbReference>
<dbReference type="EMBL" id="AK223079">
    <property type="protein sequence ID" value="BAD96799.1"/>
    <property type="molecule type" value="mRNA"/>
</dbReference>
<dbReference type="EMBL" id="AL162741">
    <property type="status" value="NOT_ANNOTATED_CDS"/>
    <property type="molecule type" value="Genomic_DNA"/>
</dbReference>
<dbReference type="EMBL" id="CH471183">
    <property type="protein sequence ID" value="EAW56272.1"/>
    <property type="molecule type" value="Genomic_DNA"/>
</dbReference>
<dbReference type="EMBL" id="CH471183">
    <property type="protein sequence ID" value="EAW56273.1"/>
    <property type="molecule type" value="Genomic_DNA"/>
</dbReference>
<dbReference type="EMBL" id="BC006211">
    <property type="protein sequence ID" value="AAH06211.1"/>
    <property type="molecule type" value="mRNA"/>
</dbReference>
<dbReference type="EMBL" id="BC007625">
    <property type="protein sequence ID" value="AAH07625.1"/>
    <property type="molecule type" value="mRNA"/>
</dbReference>
<dbReference type="EMBL" id="BC008917">
    <property type="protein sequence ID" value="AAH08917.1"/>
    <property type="molecule type" value="mRNA"/>
</dbReference>
<dbReference type="EMBL" id="BC011244">
    <property type="protein sequence ID" value="AAH11244.1"/>
    <property type="molecule type" value="mRNA"/>
</dbReference>
<dbReference type="EMBL" id="BC022375">
    <property type="protein sequence ID" value="AAH22375.1"/>
    <property type="molecule type" value="mRNA"/>
</dbReference>
<dbReference type="RefSeq" id="NP_057631.1">
    <property type="nucleotide sequence ID" value="NM_016547.2"/>
</dbReference>
<dbReference type="RefSeq" id="XP_011539858.1">
    <molecule id="Q9BRK5-4"/>
    <property type="nucleotide sequence ID" value="XM_011541556.2"/>
</dbReference>
<dbReference type="RefSeq" id="XP_047278067.1">
    <molecule id="Q9BRK5-1"/>
    <property type="nucleotide sequence ID" value="XM_047422111.1"/>
</dbReference>
<dbReference type="RefSeq" id="XP_047278068.1">
    <molecule id="Q9BRK5-6"/>
    <property type="nucleotide sequence ID" value="XM_047422112.1"/>
</dbReference>
<dbReference type="RefSeq" id="XP_054192879.1">
    <molecule id="Q9BRK5-1"/>
    <property type="nucleotide sequence ID" value="XM_054336904.1"/>
</dbReference>
<dbReference type="RefSeq" id="XP_054192880.1">
    <molecule id="Q9BRK5-6"/>
    <property type="nucleotide sequence ID" value="XM_054336905.1"/>
</dbReference>
<dbReference type="RefSeq" id="XP_054192881.1">
    <molecule id="Q9BRK5-4"/>
    <property type="nucleotide sequence ID" value="XM_054336906.1"/>
</dbReference>
<dbReference type="BioGRID" id="119334">
    <property type="interactions" value="170"/>
</dbReference>
<dbReference type="FunCoup" id="Q9BRK5">
    <property type="interactions" value="1580"/>
</dbReference>
<dbReference type="IntAct" id="Q9BRK5">
    <property type="interactions" value="111"/>
</dbReference>
<dbReference type="MINT" id="Q9BRK5"/>
<dbReference type="STRING" id="9606.ENSP00000499387"/>
<dbReference type="TCDB" id="8.A.82.3.1">
    <property type="family name" value="the calmodulin calcium binding protein (calmodulin) family"/>
</dbReference>
<dbReference type="GlyCosmos" id="Q9BRK5">
    <property type="glycosylation" value="2 sites, 1 glycan"/>
</dbReference>
<dbReference type="GlyGen" id="Q9BRK5">
    <property type="glycosylation" value="9 sites, 3 O-linked glycans (7 sites)"/>
</dbReference>
<dbReference type="iPTMnet" id="Q9BRK5"/>
<dbReference type="MetOSite" id="Q9BRK5"/>
<dbReference type="PhosphoSitePlus" id="Q9BRK5"/>
<dbReference type="BioMuta" id="SDF4"/>
<dbReference type="DMDM" id="21263447"/>
<dbReference type="jPOST" id="Q9BRK5"/>
<dbReference type="MassIVE" id="Q9BRK5"/>
<dbReference type="PaxDb" id="9606-ENSP00000353094"/>
<dbReference type="PeptideAtlas" id="Q9BRK5"/>
<dbReference type="ProteomicsDB" id="78779">
    <molecule id="Q9BRK5-1"/>
</dbReference>
<dbReference type="ProteomicsDB" id="78780">
    <molecule id="Q9BRK5-2"/>
</dbReference>
<dbReference type="ProteomicsDB" id="78781">
    <molecule id="Q9BRK5-3"/>
</dbReference>
<dbReference type="ProteomicsDB" id="78782">
    <molecule id="Q9BRK5-4"/>
</dbReference>
<dbReference type="ProteomicsDB" id="78783">
    <molecule id="Q9BRK5-5"/>
</dbReference>
<dbReference type="ProteomicsDB" id="78784">
    <molecule id="Q9BRK5-6"/>
</dbReference>
<dbReference type="Pumba" id="Q9BRK5"/>
<dbReference type="TopDownProteomics" id="Q9BRK5-4">
    <molecule id="Q9BRK5-4"/>
</dbReference>
<dbReference type="Antibodypedia" id="26159">
    <property type="antibodies" value="286 antibodies from 30 providers"/>
</dbReference>
<dbReference type="DNASU" id="51150"/>
<dbReference type="GeneID" id="51150"/>
<dbReference type="KEGG" id="hsa:51150"/>
<dbReference type="UCSC" id="uc001adh.5">
    <molecule id="Q9BRK5-1"/>
    <property type="organism name" value="human"/>
</dbReference>
<dbReference type="AGR" id="HGNC:24188"/>
<dbReference type="CTD" id="51150"/>
<dbReference type="DisGeNET" id="51150"/>
<dbReference type="GeneCards" id="SDF4"/>
<dbReference type="HGNC" id="HGNC:24188">
    <property type="gene designation" value="SDF4"/>
</dbReference>
<dbReference type="MalaCards" id="SDF4"/>
<dbReference type="MIM" id="614282">
    <property type="type" value="gene"/>
</dbReference>
<dbReference type="neXtProt" id="NX_Q9BRK5"/>
<dbReference type="PharmGKB" id="PA142670940"/>
<dbReference type="VEuPathDB" id="HostDB:ENSG00000078808"/>
<dbReference type="eggNOG" id="KOG4251">
    <property type="taxonomic scope" value="Eukaryota"/>
</dbReference>
<dbReference type="HOGENOM" id="CLU_044718_1_0_1"/>
<dbReference type="InParanoid" id="Q9BRK5"/>
<dbReference type="OrthoDB" id="9978834at2759"/>
<dbReference type="PAN-GO" id="Q9BRK5">
    <property type="GO annotations" value="3 GO annotations based on evolutionary models"/>
</dbReference>
<dbReference type="PhylomeDB" id="Q9BRK5"/>
<dbReference type="TreeFam" id="TF314849"/>
<dbReference type="PathwayCommons" id="Q9BRK5"/>
<dbReference type="SignaLink" id="Q9BRK5"/>
<dbReference type="BioGRID-ORCS" id="51150">
    <property type="hits" value="6 hits in 1154 CRISPR screens"/>
</dbReference>
<dbReference type="ChiTaRS" id="SDF4">
    <property type="organism name" value="human"/>
</dbReference>
<dbReference type="GeneWiki" id="SDF4"/>
<dbReference type="GenomeRNAi" id="51150"/>
<dbReference type="Pharos" id="Q9BRK5">
    <property type="development level" value="Tbio"/>
</dbReference>
<dbReference type="PRO" id="PR:Q9BRK5"/>
<dbReference type="Proteomes" id="UP000005640">
    <property type="component" value="Chromosome 1"/>
</dbReference>
<dbReference type="RNAct" id="Q9BRK5">
    <property type="molecule type" value="protein"/>
</dbReference>
<dbReference type="Bgee" id="ENSG00000078808">
    <property type="expression patterns" value="Expressed in stromal cell of endometrium and 193 other cell types or tissues"/>
</dbReference>
<dbReference type="ExpressionAtlas" id="Q9BRK5">
    <property type="expression patterns" value="baseline and differential"/>
</dbReference>
<dbReference type="GO" id="GO:0032059">
    <property type="term" value="C:bleb"/>
    <property type="evidence" value="ECO:0007669"/>
    <property type="project" value="UniProtKB-SubCell"/>
</dbReference>
<dbReference type="GO" id="GO:0005737">
    <property type="term" value="C:cytoplasm"/>
    <property type="evidence" value="ECO:0000250"/>
    <property type="project" value="BHF-UCL"/>
</dbReference>
<dbReference type="GO" id="GO:0005783">
    <property type="term" value="C:endoplasmic reticulum"/>
    <property type="evidence" value="ECO:0000318"/>
    <property type="project" value="GO_Central"/>
</dbReference>
<dbReference type="GO" id="GO:0070062">
    <property type="term" value="C:extracellular exosome"/>
    <property type="evidence" value="ECO:0007005"/>
    <property type="project" value="UniProtKB"/>
</dbReference>
<dbReference type="GO" id="GO:0005796">
    <property type="term" value="C:Golgi lumen"/>
    <property type="evidence" value="ECO:0000250"/>
    <property type="project" value="BHF-UCL"/>
</dbReference>
<dbReference type="GO" id="GO:0005770">
    <property type="term" value="C:late endosome"/>
    <property type="evidence" value="ECO:0000250"/>
    <property type="project" value="BHF-UCL"/>
</dbReference>
<dbReference type="GO" id="GO:0016020">
    <property type="term" value="C:membrane"/>
    <property type="evidence" value="ECO:0007005"/>
    <property type="project" value="UniProtKB"/>
</dbReference>
<dbReference type="GO" id="GO:0005886">
    <property type="term" value="C:plasma membrane"/>
    <property type="evidence" value="ECO:0007669"/>
    <property type="project" value="UniProtKB-SubCell"/>
</dbReference>
<dbReference type="GO" id="GO:0005509">
    <property type="term" value="F:calcium ion binding"/>
    <property type="evidence" value="ECO:0000314"/>
    <property type="project" value="BHF-UCL"/>
</dbReference>
<dbReference type="GO" id="GO:0042802">
    <property type="term" value="F:identical protein binding"/>
    <property type="evidence" value="ECO:0000250"/>
    <property type="project" value="BHF-UCL"/>
</dbReference>
<dbReference type="GO" id="GO:0017156">
    <property type="term" value="P:calcium-ion regulated exocytosis"/>
    <property type="evidence" value="ECO:0000250"/>
    <property type="project" value="BHF-UCL"/>
</dbReference>
<dbReference type="GO" id="GO:0021549">
    <property type="term" value="P:cerebellum development"/>
    <property type="evidence" value="ECO:0000250"/>
    <property type="project" value="BHF-UCL"/>
</dbReference>
<dbReference type="GO" id="GO:0045444">
    <property type="term" value="P:fat cell differentiation"/>
    <property type="evidence" value="ECO:0000250"/>
    <property type="project" value="BHF-UCL"/>
</dbReference>
<dbReference type="GO" id="GO:0099558">
    <property type="term" value="P:maintenance of synapse structure"/>
    <property type="evidence" value="ECO:0000316"/>
    <property type="project" value="FlyBase"/>
</dbReference>
<dbReference type="GO" id="GO:0045471">
    <property type="term" value="P:response to ethanol"/>
    <property type="evidence" value="ECO:0000250"/>
    <property type="project" value="BHF-UCL"/>
</dbReference>
<dbReference type="GO" id="GO:0009650">
    <property type="term" value="P:UV protection"/>
    <property type="evidence" value="ECO:0000250"/>
    <property type="project" value="BHF-UCL"/>
</dbReference>
<dbReference type="GO" id="GO:0070625">
    <property type="term" value="P:zymogen granule exocytosis"/>
    <property type="evidence" value="ECO:0000250"/>
    <property type="project" value="BHF-UCL"/>
</dbReference>
<dbReference type="CDD" id="cd16225">
    <property type="entry name" value="EFh_CREC_cab45"/>
    <property type="match status" value="1"/>
</dbReference>
<dbReference type="FunFam" id="1.10.238.10:FF:000120">
    <property type="entry name" value="45 kDa calcium-binding protein"/>
    <property type="match status" value="1"/>
</dbReference>
<dbReference type="FunFam" id="1.10.238.10:FF:000207">
    <property type="entry name" value="Putative 45 kDa calcium-binding protein"/>
    <property type="match status" value="1"/>
</dbReference>
<dbReference type="Gene3D" id="1.10.238.10">
    <property type="entry name" value="EF-hand"/>
    <property type="match status" value="2"/>
</dbReference>
<dbReference type="InterPro" id="IPR027240">
    <property type="entry name" value="CAB45_EFh"/>
</dbReference>
<dbReference type="InterPro" id="IPR011992">
    <property type="entry name" value="EF-hand-dom_pair"/>
</dbReference>
<dbReference type="InterPro" id="IPR018247">
    <property type="entry name" value="EF_Hand_1_Ca_BS"/>
</dbReference>
<dbReference type="InterPro" id="IPR002048">
    <property type="entry name" value="EF_hand_dom"/>
</dbReference>
<dbReference type="PANTHER" id="PTHR10827:SF98">
    <property type="entry name" value="45 KDA CALCIUM-BINDING PROTEIN"/>
    <property type="match status" value="1"/>
</dbReference>
<dbReference type="PANTHER" id="PTHR10827">
    <property type="entry name" value="RETICULOCALBIN"/>
    <property type="match status" value="1"/>
</dbReference>
<dbReference type="Pfam" id="PF13202">
    <property type="entry name" value="EF-hand_5"/>
    <property type="match status" value="1"/>
</dbReference>
<dbReference type="Pfam" id="PF13499">
    <property type="entry name" value="EF-hand_7"/>
    <property type="match status" value="1"/>
</dbReference>
<dbReference type="SMART" id="SM00054">
    <property type="entry name" value="EFh"/>
    <property type="match status" value="5"/>
</dbReference>
<dbReference type="SUPFAM" id="SSF47473">
    <property type="entry name" value="EF-hand"/>
    <property type="match status" value="2"/>
</dbReference>
<dbReference type="PROSITE" id="PS00018">
    <property type="entry name" value="EF_HAND_1"/>
    <property type="match status" value="5"/>
</dbReference>
<dbReference type="PROSITE" id="PS50222">
    <property type="entry name" value="EF_HAND_2"/>
    <property type="match status" value="5"/>
</dbReference>
<keyword id="KW-0025">Alternative splicing</keyword>
<keyword id="KW-0106">Calcium</keyword>
<keyword id="KW-1003">Cell membrane</keyword>
<keyword id="KW-0966">Cell projection</keyword>
<keyword id="KW-0963">Cytoplasm</keyword>
<keyword id="KW-0268">Exocytosis</keyword>
<keyword id="KW-0325">Glycoprotein</keyword>
<keyword id="KW-0333">Golgi apparatus</keyword>
<keyword id="KW-0472">Membrane</keyword>
<keyword id="KW-0479">Metal-binding</keyword>
<keyword id="KW-0597">Phosphoprotein</keyword>
<keyword id="KW-1267">Proteomics identification</keyword>
<keyword id="KW-1185">Reference proteome</keyword>
<keyword id="KW-0677">Repeat</keyword>
<keyword id="KW-0732">Signal</keyword>